<evidence type="ECO:0000305" key="1"/>
<sequence>MKNRRRIYEGKAKILYEGPEPGTLIQFFKDDATAFNKKKHEVVDGKGVLNNRISEHIFNHLNRMGIPTHFIRRLNMREQLIKEVEIIPLEVVVRNVAAGSLSKRLGIEEGTVLPRSIIEFYYKADALDDPMVSEEHITAFGWASPQEIDDVMALAIRVNDFLSGLFMGVGIQLVDFKIECGRLFEGDMMRIVVADEISPDSCRLWDVATQDKLDKDRFRRDMGGLVEAYQEVARRLGIMNENEPPRPTGPVLVASTDVVKGKPH</sequence>
<comment type="catalytic activity">
    <reaction>
        <text>5-amino-1-(5-phospho-D-ribosyl)imidazole-4-carboxylate + L-aspartate + ATP = (2S)-2-[5-amino-1-(5-phospho-beta-D-ribosyl)imidazole-4-carboxamido]succinate + ADP + phosphate + 2 H(+)</text>
        <dbReference type="Rhea" id="RHEA:22628"/>
        <dbReference type="ChEBI" id="CHEBI:15378"/>
        <dbReference type="ChEBI" id="CHEBI:29991"/>
        <dbReference type="ChEBI" id="CHEBI:30616"/>
        <dbReference type="ChEBI" id="CHEBI:43474"/>
        <dbReference type="ChEBI" id="CHEBI:58443"/>
        <dbReference type="ChEBI" id="CHEBI:77657"/>
        <dbReference type="ChEBI" id="CHEBI:456216"/>
        <dbReference type="EC" id="6.3.2.6"/>
    </reaction>
</comment>
<comment type="pathway">
    <text>Purine metabolism; IMP biosynthesis via de novo pathway; 5-amino-1-(5-phospho-D-ribosyl)imidazole-4-carboxamide from 5-amino-1-(5-phospho-D-ribosyl)imidazole-4-carboxylate: step 1/2.</text>
</comment>
<comment type="similarity">
    <text evidence="1">Belongs to the SAICAR synthetase family.</text>
</comment>
<keyword id="KW-0067">ATP-binding</keyword>
<keyword id="KW-0436">Ligase</keyword>
<keyword id="KW-0547">Nucleotide-binding</keyword>
<keyword id="KW-0658">Purine biosynthesis</keyword>
<feature type="chain" id="PRO_0000100859" description="Phosphoribosylaminoimidazole-succinocarboxamide synthase 1">
    <location>
        <begin position="1"/>
        <end position="264"/>
    </location>
</feature>
<organism>
    <name type="scientific">Mesorhizobium japonicum (strain LMG 29417 / CECT 9101 / MAFF 303099)</name>
    <name type="common">Mesorhizobium loti (strain MAFF 303099)</name>
    <dbReference type="NCBI Taxonomy" id="266835"/>
    <lineage>
        <taxon>Bacteria</taxon>
        <taxon>Pseudomonadati</taxon>
        <taxon>Pseudomonadota</taxon>
        <taxon>Alphaproteobacteria</taxon>
        <taxon>Hyphomicrobiales</taxon>
        <taxon>Phyllobacteriaceae</taxon>
        <taxon>Mesorhizobium</taxon>
    </lineage>
</organism>
<name>PUR71_RHILO</name>
<gene>
    <name type="primary">purC1</name>
    <name type="synonym">purC</name>
    <name type="ordered locus">mll0069</name>
</gene>
<dbReference type="EC" id="6.3.2.6"/>
<dbReference type="EMBL" id="BA000012">
    <property type="protein sequence ID" value="BAB47733.1"/>
    <property type="molecule type" value="Genomic_DNA"/>
</dbReference>
<dbReference type="RefSeq" id="WP_010909103.1">
    <property type="nucleotide sequence ID" value="NC_002678.2"/>
</dbReference>
<dbReference type="SMR" id="Q98NM8"/>
<dbReference type="GeneID" id="66684389"/>
<dbReference type="KEGG" id="mlo:mll0069"/>
<dbReference type="eggNOG" id="COG0152">
    <property type="taxonomic scope" value="Bacteria"/>
</dbReference>
<dbReference type="HOGENOM" id="CLU_061495_2_0_5"/>
<dbReference type="UniPathway" id="UPA00074">
    <property type="reaction ID" value="UER00131"/>
</dbReference>
<dbReference type="Proteomes" id="UP000000552">
    <property type="component" value="Chromosome"/>
</dbReference>
<dbReference type="GO" id="GO:0005829">
    <property type="term" value="C:cytosol"/>
    <property type="evidence" value="ECO:0007669"/>
    <property type="project" value="TreeGrafter"/>
</dbReference>
<dbReference type="GO" id="GO:0005524">
    <property type="term" value="F:ATP binding"/>
    <property type="evidence" value="ECO:0007669"/>
    <property type="project" value="UniProtKB-KW"/>
</dbReference>
<dbReference type="GO" id="GO:0004639">
    <property type="term" value="F:phosphoribosylaminoimidazolesuccinocarboxamide synthase activity"/>
    <property type="evidence" value="ECO:0007669"/>
    <property type="project" value="UniProtKB-UniRule"/>
</dbReference>
<dbReference type="GO" id="GO:0006189">
    <property type="term" value="P:'de novo' IMP biosynthetic process"/>
    <property type="evidence" value="ECO:0007669"/>
    <property type="project" value="UniProtKB-UniRule"/>
</dbReference>
<dbReference type="GO" id="GO:0009236">
    <property type="term" value="P:cobalamin biosynthetic process"/>
    <property type="evidence" value="ECO:0007669"/>
    <property type="project" value="InterPro"/>
</dbReference>
<dbReference type="CDD" id="cd01415">
    <property type="entry name" value="SAICAR_synt_PurC"/>
    <property type="match status" value="1"/>
</dbReference>
<dbReference type="FunFam" id="3.30.470.20:FF:000006">
    <property type="entry name" value="Phosphoribosylaminoimidazole-succinocarboxamide synthase"/>
    <property type="match status" value="1"/>
</dbReference>
<dbReference type="Gene3D" id="3.30.470.20">
    <property type="entry name" value="ATP-grasp fold, B domain"/>
    <property type="match status" value="1"/>
</dbReference>
<dbReference type="Gene3D" id="3.30.200.20">
    <property type="entry name" value="Phosphorylase Kinase, domain 1"/>
    <property type="match status" value="1"/>
</dbReference>
<dbReference type="HAMAP" id="MF_00137">
    <property type="entry name" value="SAICAR_synth"/>
    <property type="match status" value="1"/>
</dbReference>
<dbReference type="InterPro" id="IPR028923">
    <property type="entry name" value="SAICAR_synt/ADE2_N"/>
</dbReference>
<dbReference type="InterPro" id="IPR033934">
    <property type="entry name" value="SAICAR_synt_PurC"/>
</dbReference>
<dbReference type="InterPro" id="IPR001636">
    <property type="entry name" value="SAICAR_synth"/>
</dbReference>
<dbReference type="InterPro" id="IPR050089">
    <property type="entry name" value="SAICAR_synthetase"/>
</dbReference>
<dbReference type="InterPro" id="IPR018236">
    <property type="entry name" value="SAICAR_synthetase_CS"/>
</dbReference>
<dbReference type="NCBIfam" id="TIGR00081">
    <property type="entry name" value="purC"/>
    <property type="match status" value="1"/>
</dbReference>
<dbReference type="PANTHER" id="PTHR43599">
    <property type="entry name" value="MULTIFUNCTIONAL PROTEIN ADE2"/>
    <property type="match status" value="1"/>
</dbReference>
<dbReference type="PANTHER" id="PTHR43599:SF3">
    <property type="entry name" value="SI:DKEY-6E2.2"/>
    <property type="match status" value="1"/>
</dbReference>
<dbReference type="Pfam" id="PF01259">
    <property type="entry name" value="SAICAR_synt"/>
    <property type="match status" value="1"/>
</dbReference>
<dbReference type="SUPFAM" id="SSF56104">
    <property type="entry name" value="SAICAR synthase-like"/>
    <property type="match status" value="1"/>
</dbReference>
<dbReference type="PROSITE" id="PS01057">
    <property type="entry name" value="SAICAR_SYNTHETASE_1"/>
    <property type="match status" value="1"/>
</dbReference>
<protein>
    <recommendedName>
        <fullName>Phosphoribosylaminoimidazole-succinocarboxamide synthase 1</fullName>
        <ecNumber>6.3.2.6</ecNumber>
    </recommendedName>
    <alternativeName>
        <fullName>SAICAR synthetase 1</fullName>
    </alternativeName>
</protein>
<proteinExistence type="inferred from homology"/>
<accession>Q98NM8</accession>
<reference key="1">
    <citation type="journal article" date="2000" name="DNA Res.">
        <title>Complete genome structure of the nitrogen-fixing symbiotic bacterium Mesorhizobium loti.</title>
        <authorList>
            <person name="Kaneko T."/>
            <person name="Nakamura Y."/>
            <person name="Sato S."/>
            <person name="Asamizu E."/>
            <person name="Kato T."/>
            <person name="Sasamoto S."/>
            <person name="Watanabe A."/>
            <person name="Idesawa K."/>
            <person name="Ishikawa A."/>
            <person name="Kawashima K."/>
            <person name="Kimura T."/>
            <person name="Kishida Y."/>
            <person name="Kiyokawa C."/>
            <person name="Kohara M."/>
            <person name="Matsumoto M."/>
            <person name="Matsuno A."/>
            <person name="Mochizuki Y."/>
            <person name="Nakayama S."/>
            <person name="Nakazaki N."/>
            <person name="Shimpo S."/>
            <person name="Sugimoto M."/>
            <person name="Takeuchi C."/>
            <person name="Yamada M."/>
            <person name="Tabata S."/>
        </authorList>
    </citation>
    <scope>NUCLEOTIDE SEQUENCE [LARGE SCALE GENOMIC DNA]</scope>
    <source>
        <strain>LMG 29417 / CECT 9101 / MAFF 303099</strain>
    </source>
</reference>